<comment type="function">
    <text evidence="1">Produces a precursor for alginate polymerization. The alginate layer provides a protective barrier against host immune defenses and antibiotics.</text>
</comment>
<comment type="catalytic activity">
    <reaction evidence="1">
        <text>D-mannose 6-phosphate = D-fructose 6-phosphate</text>
        <dbReference type="Rhea" id="RHEA:12356"/>
        <dbReference type="ChEBI" id="CHEBI:58735"/>
        <dbReference type="ChEBI" id="CHEBI:61527"/>
        <dbReference type="EC" id="5.3.1.8"/>
    </reaction>
</comment>
<comment type="catalytic activity">
    <reaction evidence="1">
        <text>alpha-D-mannose 1-phosphate + GTP + H(+) = GDP-alpha-D-mannose + diphosphate</text>
        <dbReference type="Rhea" id="RHEA:15229"/>
        <dbReference type="ChEBI" id="CHEBI:15378"/>
        <dbReference type="ChEBI" id="CHEBI:33019"/>
        <dbReference type="ChEBI" id="CHEBI:37565"/>
        <dbReference type="ChEBI" id="CHEBI:57527"/>
        <dbReference type="ChEBI" id="CHEBI:58409"/>
        <dbReference type="EC" id="2.7.7.13"/>
    </reaction>
</comment>
<comment type="cofactor">
    <cofactor evidence="1">
        <name>Co(2+)</name>
        <dbReference type="ChEBI" id="CHEBI:48828"/>
    </cofactor>
    <text evidence="1">Co(2+) (for PMI).</text>
</comment>
<comment type="biophysicochemical properties">
    <kinetics>
        <KM evidence="1">3.03 mM for D-mannose 6-phosphate</KM>
        <KM evidence="1">20.5 uM for D-mannose 1-phosphate</KM>
        <KM evidence="1">29.5 uM for GTP</KM>
        <KM evidence="1">14.2 uM for GDP-D-mannose</KM>
        <Vmax evidence="1">830.0 nmol/min/mg enzyme for the PMI forward reaction</Vmax>
        <Vmax evidence="1">5680.0 nmol/min/mg enzyme for the GMP forward reaction</Vmax>
        <Vmax evidence="1">5170.0 nmol/min/mg enzyme for the GMP reverse reaction</Vmax>
    </kinetics>
    <phDependence>
        <text evidence="1">Optimum pH is 7.0 for PMI activity, and 7.6 for GMP activity.</text>
    </phDependence>
</comment>
<comment type="pathway">
    <text>Nucleotide-sugar biosynthesis; GDP-alpha-D-mannose biosynthesis; GDP-alpha-D-mannose from alpha-D-mannose 1-phosphate (GTP route): step 1/1.</text>
</comment>
<comment type="pathway">
    <text>Nucleotide-sugar biosynthesis; GDP-alpha-D-mannose biosynthesis; alpha-D-mannose 1-phosphate from D-fructose 6-phosphate: step 1/2.</text>
</comment>
<comment type="subunit">
    <text evidence="1">Monomer.</text>
</comment>
<comment type="similarity">
    <text evidence="2">Belongs to the mannose-6-phosphate isomerase type 2 family.</text>
</comment>
<gene>
    <name type="primary">algA</name>
    <name type="synonym">pmi</name>
    <name type="ordered locus">PA3551</name>
</gene>
<dbReference type="EC" id="5.3.1.8"/>
<dbReference type="EC" id="2.7.7.13"/>
<dbReference type="EMBL" id="M14037">
    <property type="protein sequence ID" value="AAA25972.1"/>
    <property type="molecule type" value="Genomic_DNA"/>
</dbReference>
<dbReference type="EMBL" id="AE004091">
    <property type="protein sequence ID" value="AAG06939.1"/>
    <property type="molecule type" value="Genomic_DNA"/>
</dbReference>
<dbReference type="PIR" id="A38598">
    <property type="entry name" value="A38598"/>
</dbReference>
<dbReference type="PIR" id="B83201">
    <property type="entry name" value="B83201"/>
</dbReference>
<dbReference type="RefSeq" id="NP_252241.1">
    <property type="nucleotide sequence ID" value="NC_002516.2"/>
</dbReference>
<dbReference type="RefSeq" id="WP_003092113.1">
    <property type="nucleotide sequence ID" value="NZ_QZGE01000001.1"/>
</dbReference>
<dbReference type="SMR" id="P07874"/>
<dbReference type="FunCoup" id="P07874">
    <property type="interactions" value="198"/>
</dbReference>
<dbReference type="STRING" id="208964.PA3551"/>
<dbReference type="PaxDb" id="208964-PA3551"/>
<dbReference type="GeneID" id="879142"/>
<dbReference type="KEGG" id="pae:PA3551"/>
<dbReference type="PATRIC" id="fig|208964.12.peg.3716"/>
<dbReference type="PseudoCAP" id="PA3551"/>
<dbReference type="HOGENOM" id="CLU_035527_1_0_6"/>
<dbReference type="InParanoid" id="P07874"/>
<dbReference type="OrthoDB" id="9806359at2"/>
<dbReference type="PhylomeDB" id="P07874"/>
<dbReference type="BioCyc" id="MetaCyc:MONOMER-13384"/>
<dbReference type="BioCyc" id="PAER208964:G1FZ6-3619-MONOMER"/>
<dbReference type="BRENDA" id="2.7.7.13">
    <property type="organism ID" value="5087"/>
</dbReference>
<dbReference type="SABIO-RK" id="P07874"/>
<dbReference type="UniPathway" id="UPA00126">
    <property type="reaction ID" value="UER00423"/>
</dbReference>
<dbReference type="UniPathway" id="UPA00126">
    <property type="reaction ID" value="UER00930"/>
</dbReference>
<dbReference type="Proteomes" id="UP000002438">
    <property type="component" value="Chromosome"/>
</dbReference>
<dbReference type="GO" id="GO:0005525">
    <property type="term" value="F:GTP binding"/>
    <property type="evidence" value="ECO:0007669"/>
    <property type="project" value="UniProtKB-KW"/>
</dbReference>
<dbReference type="GO" id="GO:0004475">
    <property type="term" value="F:mannose-1-phosphate guanylyltransferase (GTP) activity"/>
    <property type="evidence" value="ECO:0000314"/>
    <property type="project" value="PseudoCAP"/>
</dbReference>
<dbReference type="GO" id="GO:0004476">
    <property type="term" value="F:mannose-6-phosphate isomerase activity"/>
    <property type="evidence" value="ECO:0000314"/>
    <property type="project" value="PseudoCAP"/>
</dbReference>
<dbReference type="GO" id="GO:0042121">
    <property type="term" value="P:alginic acid biosynthetic process"/>
    <property type="evidence" value="ECO:0000315"/>
    <property type="project" value="PseudoCAP"/>
</dbReference>
<dbReference type="GO" id="GO:0009298">
    <property type="term" value="P:GDP-mannose biosynthetic process"/>
    <property type="evidence" value="ECO:0000318"/>
    <property type="project" value="GO_Central"/>
</dbReference>
<dbReference type="CDD" id="cd02213">
    <property type="entry name" value="cupin_PMI_typeII_C"/>
    <property type="match status" value="1"/>
</dbReference>
<dbReference type="CDD" id="cd02509">
    <property type="entry name" value="GDP-M1P_Guanylyltransferase"/>
    <property type="match status" value="1"/>
</dbReference>
<dbReference type="FunFam" id="3.90.550.10:FF:000046">
    <property type="entry name" value="Mannose-1-phosphate guanylyltransferase (GDP)"/>
    <property type="match status" value="1"/>
</dbReference>
<dbReference type="FunFam" id="2.60.120.10:FF:000032">
    <property type="entry name" value="Mannose-1-phosphate guanylyltransferase/mannose-6-phosphate isomerase"/>
    <property type="match status" value="1"/>
</dbReference>
<dbReference type="Gene3D" id="2.60.120.10">
    <property type="entry name" value="Jelly Rolls"/>
    <property type="match status" value="1"/>
</dbReference>
<dbReference type="Gene3D" id="3.90.550.10">
    <property type="entry name" value="Spore Coat Polysaccharide Biosynthesis Protein SpsA, Chain A"/>
    <property type="match status" value="1"/>
</dbReference>
<dbReference type="InterPro" id="IPR049577">
    <property type="entry name" value="GMPP_N"/>
</dbReference>
<dbReference type="InterPro" id="IPR006375">
    <property type="entry name" value="Man1P_GuaTrfase/Man6P_Isoase"/>
</dbReference>
<dbReference type="InterPro" id="IPR001538">
    <property type="entry name" value="Man6P_isomerase-2_C"/>
</dbReference>
<dbReference type="InterPro" id="IPR054566">
    <property type="entry name" value="ManC/GMP-like_b-helix"/>
</dbReference>
<dbReference type="InterPro" id="IPR051161">
    <property type="entry name" value="Mannose-6P_isomerase_type2"/>
</dbReference>
<dbReference type="InterPro" id="IPR005835">
    <property type="entry name" value="NTP_transferase_dom"/>
</dbReference>
<dbReference type="InterPro" id="IPR029044">
    <property type="entry name" value="Nucleotide-diphossugar_trans"/>
</dbReference>
<dbReference type="InterPro" id="IPR014710">
    <property type="entry name" value="RmlC-like_jellyroll"/>
</dbReference>
<dbReference type="InterPro" id="IPR011051">
    <property type="entry name" value="RmlC_Cupin_sf"/>
</dbReference>
<dbReference type="NCBIfam" id="TIGR01479">
    <property type="entry name" value="GMP_PMI"/>
    <property type="match status" value="1"/>
</dbReference>
<dbReference type="PANTHER" id="PTHR46390">
    <property type="entry name" value="MANNOSE-1-PHOSPHATE GUANYLYLTRANSFERASE"/>
    <property type="match status" value="1"/>
</dbReference>
<dbReference type="PANTHER" id="PTHR46390:SF1">
    <property type="entry name" value="MANNOSE-1-PHOSPHATE GUANYLYLTRANSFERASE"/>
    <property type="match status" value="1"/>
</dbReference>
<dbReference type="Pfam" id="PF22640">
    <property type="entry name" value="ManC_GMP_beta-helix"/>
    <property type="match status" value="1"/>
</dbReference>
<dbReference type="Pfam" id="PF01050">
    <property type="entry name" value="MannoseP_isomer"/>
    <property type="match status" value="1"/>
</dbReference>
<dbReference type="Pfam" id="PF00483">
    <property type="entry name" value="NTP_transferase"/>
    <property type="match status" value="1"/>
</dbReference>
<dbReference type="SUPFAM" id="SSF53448">
    <property type="entry name" value="Nucleotide-diphospho-sugar transferases"/>
    <property type="match status" value="1"/>
</dbReference>
<dbReference type="SUPFAM" id="SSF51182">
    <property type="entry name" value="RmlC-like cupins"/>
    <property type="match status" value="1"/>
</dbReference>
<protein>
    <recommendedName>
        <fullName>Alginate biosynthesis protein AlgA</fullName>
    </recommendedName>
    <domain>
        <recommendedName>
            <fullName>Mannose-6-phosphate isomerase</fullName>
            <ecNumber>5.3.1.8</ecNumber>
        </recommendedName>
        <alternativeName>
            <fullName>Phosphohexomutase</fullName>
        </alternativeName>
        <alternativeName>
            <fullName>Phosphomannose isomerase</fullName>
            <shortName>PMI</shortName>
        </alternativeName>
    </domain>
    <domain>
        <recommendedName>
            <fullName>Mannose-1-phosphate guanylyltransferase</fullName>
            <ecNumber>2.7.7.13</ecNumber>
        </recommendedName>
        <alternativeName>
            <fullName>GDP-mannose pyrophosphorylase</fullName>
            <shortName>GMP</shortName>
            <shortName>GMPP</shortName>
        </alternativeName>
        <alternativeName>
            <fullName>GTP--mannose-1-phosphate guanylyltransferase</fullName>
        </alternativeName>
    </domain>
</protein>
<sequence>MIPVILSGGSGSRLWPLSRKQYPKQFLALTGDDTLFQQTIKRLAFDGMQAPLLVCNKEHRFIVQEQLEAQNLASQAILLEPFGRNTAPAVAIAAMKLVAEGRDELLLILPADHVIEDQRAFQQALALATNAAEKGEMVLFGIPASRPETGYGYIRASADAQLPEGVSRVQSFVEKPDEARAREFVAAGGYYWNSGMFLFRASRYLEELKKHDADIYDTCLLALERSQHDGDLVNIDAATFECCPDNSIDYAVMEKTSRACVVPLSAGWNDVGSWSSIWDVHAKDANGNVTKGDVLVHDSHNCLVHGNGKLVSVIGLEDIVVVETKDAMMIAHKDRVQDVKHVVKDLDAQGRSETQNHCEVYRPWGSYDSVDMGGRFQVKHITVKPGARLSLQMHHHRAEHWIVVSGTAQVTCDDKTFLLTENQSTYIPIASVHRLANPGKIPLEIIEVQSGSYLGEDDIERLEDVYGRTAEPALQVVAGSR</sequence>
<reference key="1">
    <citation type="journal article" date="1986" name="Gene">
        <title>Nucleotide sequence analysis of the phosphomannose isomerase gene (pmi) of Pseudomonas aeruginosa and comparison with the corresponding Escherichia coli gene manA.</title>
        <authorList>
            <person name="Darzins A."/>
            <person name="Frantz B."/>
            <person name="Vanags R.I."/>
            <person name="Chakrabarty A.M."/>
        </authorList>
    </citation>
    <scope>NUCLEOTIDE SEQUENCE [GENOMIC DNA]</scope>
</reference>
<reference key="2">
    <citation type="journal article" date="2000" name="Nature">
        <title>Complete genome sequence of Pseudomonas aeruginosa PAO1, an opportunistic pathogen.</title>
        <authorList>
            <person name="Stover C.K."/>
            <person name="Pham X.-Q.T."/>
            <person name="Erwin A.L."/>
            <person name="Mizoguchi S.D."/>
            <person name="Warrener P."/>
            <person name="Hickey M.J."/>
            <person name="Brinkman F.S.L."/>
            <person name="Hufnagle W.O."/>
            <person name="Kowalik D.J."/>
            <person name="Lagrou M."/>
            <person name="Garber R.L."/>
            <person name="Goltry L."/>
            <person name="Tolentino E."/>
            <person name="Westbrock-Wadman S."/>
            <person name="Yuan Y."/>
            <person name="Brody L.L."/>
            <person name="Coulter S.N."/>
            <person name="Folger K.R."/>
            <person name="Kas A."/>
            <person name="Larbig K."/>
            <person name="Lim R.M."/>
            <person name="Smith K.A."/>
            <person name="Spencer D.H."/>
            <person name="Wong G.K.-S."/>
            <person name="Wu Z."/>
            <person name="Paulsen I.T."/>
            <person name="Reizer J."/>
            <person name="Saier M.H. Jr."/>
            <person name="Hancock R.E.W."/>
            <person name="Lory S."/>
            <person name="Olson M.V."/>
        </authorList>
    </citation>
    <scope>NUCLEOTIDE SEQUENCE [LARGE SCALE GENOMIC DNA]</scope>
    <source>
        <strain>ATCC 15692 / DSM 22644 / CIP 104116 / JCM 14847 / LMG 12228 / 1C / PRS 101 / PAO1</strain>
    </source>
</reference>
<reference key="3">
    <citation type="journal article" date="1991" name="J. Biol. Chem.">
        <title>Purification and characterization of phosphomannose isomerase-guanosine diphospho-D-mannose pyrophosphorylase. A bifunctional enzyme in the alginate biosynthetic pathway of Pseudomonas aeruginosa.</title>
        <authorList>
            <person name="Shinabarger D."/>
            <person name="Berry A."/>
            <person name="May T.B."/>
            <person name="Rothmel R."/>
            <person name="Fialho A."/>
            <person name="Chakrabarty A.M."/>
        </authorList>
    </citation>
    <scope>PROTEIN SEQUENCE OF 1-10</scope>
    <scope>FUNCTION</scope>
    <scope>CATALYTIC ACTIVITY</scope>
    <scope>SUBUNIT</scope>
    <scope>COFACTOR</scope>
    <scope>BIOPHYSICOCHEMICAL PROPERTIES</scope>
</reference>
<evidence type="ECO:0000269" key="1">
    <source>
    </source>
</evidence>
<evidence type="ECO:0000305" key="2"/>
<keyword id="KW-0016">Alginate biosynthesis</keyword>
<keyword id="KW-0170">Cobalt</keyword>
<keyword id="KW-0903">Direct protein sequencing</keyword>
<keyword id="KW-0342">GTP-binding</keyword>
<keyword id="KW-0413">Isomerase</keyword>
<keyword id="KW-0511">Multifunctional enzyme</keyword>
<keyword id="KW-0547">Nucleotide-binding</keyword>
<keyword id="KW-0548">Nucleotidyltransferase</keyword>
<keyword id="KW-1185">Reference proteome</keyword>
<keyword id="KW-0808">Transferase</keyword>
<feature type="chain" id="PRO_0000194248" description="Alginate biosynthesis protein AlgA">
    <location>
        <begin position="1"/>
        <end position="481"/>
    </location>
</feature>
<feature type="sequence conflict" description="In Ref. 1; AAA25972." evidence="2" ref="1">
    <original>FL</original>
    <variation>LV</variation>
    <location>
        <begin position="26"/>
        <end position="27"/>
    </location>
</feature>
<feature type="sequence conflict" description="In Ref. 1; AAA25972." evidence="2" ref="1">
    <original>I</original>
    <variation>L</variation>
    <location>
        <position position="115"/>
    </location>
</feature>
<feature type="sequence conflict" description="In Ref. 1; AAA25972." evidence="2" ref="1">
    <original>S</original>
    <variation>T</variation>
    <location>
        <position position="157"/>
    </location>
</feature>
<feature type="sequence conflict" description="In Ref. 1; AAA25972." evidence="2" ref="1">
    <original>EV</original>
    <variation>DL</variation>
    <location>
        <begin position="359"/>
        <end position="360"/>
    </location>
</feature>
<organism>
    <name type="scientific">Pseudomonas aeruginosa (strain ATCC 15692 / DSM 22644 / CIP 104116 / JCM 14847 / LMG 12228 / 1C / PRS 101 / PAO1)</name>
    <dbReference type="NCBI Taxonomy" id="208964"/>
    <lineage>
        <taxon>Bacteria</taxon>
        <taxon>Pseudomonadati</taxon>
        <taxon>Pseudomonadota</taxon>
        <taxon>Gammaproteobacteria</taxon>
        <taxon>Pseudomonadales</taxon>
        <taxon>Pseudomonadaceae</taxon>
        <taxon>Pseudomonas</taxon>
    </lineage>
</organism>
<proteinExistence type="evidence at protein level"/>
<name>ALGA_PSEAE</name>
<accession>P07874</accession>
<accession>Q9HY66</accession>